<reference key="1">
    <citation type="journal article" date="2008" name="Genome Res.">
        <title>Genome sequence of the beta-rhizobium Cupriavidus taiwanensis and comparative genomics of rhizobia.</title>
        <authorList>
            <person name="Amadou C."/>
            <person name="Pascal G."/>
            <person name="Mangenot S."/>
            <person name="Glew M."/>
            <person name="Bontemps C."/>
            <person name="Capela D."/>
            <person name="Carrere S."/>
            <person name="Cruveiller S."/>
            <person name="Dossat C."/>
            <person name="Lajus A."/>
            <person name="Marchetti M."/>
            <person name="Poinsot V."/>
            <person name="Rouy Z."/>
            <person name="Servin B."/>
            <person name="Saad M."/>
            <person name="Schenowitz C."/>
            <person name="Barbe V."/>
            <person name="Batut J."/>
            <person name="Medigue C."/>
            <person name="Masson-Boivin C."/>
        </authorList>
    </citation>
    <scope>NUCLEOTIDE SEQUENCE [LARGE SCALE GENOMIC DNA]</scope>
    <source>
        <strain>DSM 17343 / BCRC 17206 / CCUG 44338 / CIP 107171 / LMG 19424 / R1</strain>
    </source>
</reference>
<feature type="chain" id="PRO_1000115856" description="Enolase">
    <location>
        <begin position="1"/>
        <end position="429"/>
    </location>
</feature>
<feature type="active site" description="Proton donor" evidence="1">
    <location>
        <position position="205"/>
    </location>
</feature>
<feature type="active site" description="Proton acceptor" evidence="1">
    <location>
        <position position="339"/>
    </location>
</feature>
<feature type="binding site" evidence="1">
    <location>
        <position position="163"/>
    </location>
    <ligand>
        <name>(2R)-2-phosphoglycerate</name>
        <dbReference type="ChEBI" id="CHEBI:58289"/>
    </ligand>
</feature>
<feature type="binding site" evidence="1">
    <location>
        <position position="242"/>
    </location>
    <ligand>
        <name>Mg(2+)</name>
        <dbReference type="ChEBI" id="CHEBI:18420"/>
    </ligand>
</feature>
<feature type="binding site" evidence="1">
    <location>
        <position position="287"/>
    </location>
    <ligand>
        <name>Mg(2+)</name>
        <dbReference type="ChEBI" id="CHEBI:18420"/>
    </ligand>
</feature>
<feature type="binding site" evidence="1">
    <location>
        <position position="314"/>
    </location>
    <ligand>
        <name>Mg(2+)</name>
        <dbReference type="ChEBI" id="CHEBI:18420"/>
    </ligand>
</feature>
<feature type="binding site" evidence="1">
    <location>
        <position position="339"/>
    </location>
    <ligand>
        <name>(2R)-2-phosphoglycerate</name>
        <dbReference type="ChEBI" id="CHEBI:58289"/>
    </ligand>
</feature>
<feature type="binding site" evidence="1">
    <location>
        <position position="368"/>
    </location>
    <ligand>
        <name>(2R)-2-phosphoglycerate</name>
        <dbReference type="ChEBI" id="CHEBI:58289"/>
    </ligand>
</feature>
<feature type="binding site" evidence="1">
    <location>
        <position position="369"/>
    </location>
    <ligand>
        <name>(2R)-2-phosphoglycerate</name>
        <dbReference type="ChEBI" id="CHEBI:58289"/>
    </ligand>
</feature>
<feature type="binding site" evidence="1">
    <location>
        <position position="390"/>
    </location>
    <ligand>
        <name>(2R)-2-phosphoglycerate</name>
        <dbReference type="ChEBI" id="CHEBI:58289"/>
    </ligand>
</feature>
<name>ENO_CUPTR</name>
<sequence length="429" mass="45843">MSAIVDIIGREVLDSRGNPTVECDVLLESGVMGRAAVPSGASTGSREAIELRDGDKGRYLGKGVLKAVEHINTEISEAIMGLDASEQAFLDRTLIDLDGTENKGRLGANAMLAVSMAVAKAAAEEAGLPLYRYFGGSGAMQLPVPMMNIVNGGAHANNSLDIQEFMVMPVSQTSFREALRCGAEIFHALKKILADKGMSTAVGDEGGFAPNFSSNEECLNTIVQAIEKAGYRAGEDVLLALDCAASEFYHEAEGVYQLEGEGLKLSSTQFADYLANLCDKFPIVSIEDGMAEGDWDGWKTLTDKLGKRVQLVGDDLFVTNTKILKEGIEKGIGNSILIKINQIGTLTETFAAIEMAKRAGYTAVISHRSGETEDSTIADIAVGTNAGQIKTGSLSRSDRMAKYNQLLRIEEDLGDIASYPGKGAFYNLR</sequence>
<gene>
    <name evidence="1" type="primary">eno</name>
    <name type="ordered locus">RALTA_A1168</name>
</gene>
<comment type="function">
    <text evidence="1">Catalyzes the reversible conversion of 2-phosphoglycerate (2-PG) into phosphoenolpyruvate (PEP). It is essential for the degradation of carbohydrates via glycolysis.</text>
</comment>
<comment type="catalytic activity">
    <reaction evidence="1">
        <text>(2R)-2-phosphoglycerate = phosphoenolpyruvate + H2O</text>
        <dbReference type="Rhea" id="RHEA:10164"/>
        <dbReference type="ChEBI" id="CHEBI:15377"/>
        <dbReference type="ChEBI" id="CHEBI:58289"/>
        <dbReference type="ChEBI" id="CHEBI:58702"/>
        <dbReference type="EC" id="4.2.1.11"/>
    </reaction>
</comment>
<comment type="cofactor">
    <cofactor evidence="1">
        <name>Mg(2+)</name>
        <dbReference type="ChEBI" id="CHEBI:18420"/>
    </cofactor>
    <text evidence="1">Binds a second Mg(2+) ion via substrate during catalysis.</text>
</comment>
<comment type="pathway">
    <text evidence="1">Carbohydrate degradation; glycolysis; pyruvate from D-glyceraldehyde 3-phosphate: step 4/5.</text>
</comment>
<comment type="subcellular location">
    <subcellularLocation>
        <location evidence="1">Cytoplasm</location>
    </subcellularLocation>
    <subcellularLocation>
        <location evidence="1">Secreted</location>
    </subcellularLocation>
    <subcellularLocation>
        <location evidence="1">Cell surface</location>
    </subcellularLocation>
    <text evidence="1">Fractions of enolase are present in both the cytoplasm and on the cell surface.</text>
</comment>
<comment type="similarity">
    <text evidence="1">Belongs to the enolase family.</text>
</comment>
<accession>B3R499</accession>
<protein>
    <recommendedName>
        <fullName evidence="1">Enolase</fullName>
        <ecNumber evidence="1">4.2.1.11</ecNumber>
    </recommendedName>
    <alternativeName>
        <fullName evidence="1">2-phospho-D-glycerate hydro-lyase</fullName>
    </alternativeName>
    <alternativeName>
        <fullName evidence="1">2-phosphoglycerate dehydratase</fullName>
    </alternativeName>
</protein>
<keyword id="KW-0963">Cytoplasm</keyword>
<keyword id="KW-0324">Glycolysis</keyword>
<keyword id="KW-0456">Lyase</keyword>
<keyword id="KW-0460">Magnesium</keyword>
<keyword id="KW-0479">Metal-binding</keyword>
<keyword id="KW-0964">Secreted</keyword>
<evidence type="ECO:0000255" key="1">
    <source>
        <dbReference type="HAMAP-Rule" id="MF_00318"/>
    </source>
</evidence>
<organism>
    <name type="scientific">Cupriavidus taiwanensis (strain DSM 17343 / BCRC 17206 / CCUG 44338 / CIP 107171 / LMG 19424 / R1)</name>
    <name type="common">Ralstonia taiwanensis (strain LMG 19424)</name>
    <dbReference type="NCBI Taxonomy" id="977880"/>
    <lineage>
        <taxon>Bacteria</taxon>
        <taxon>Pseudomonadati</taxon>
        <taxon>Pseudomonadota</taxon>
        <taxon>Betaproteobacteria</taxon>
        <taxon>Burkholderiales</taxon>
        <taxon>Burkholderiaceae</taxon>
        <taxon>Cupriavidus</taxon>
    </lineage>
</organism>
<proteinExistence type="inferred from homology"/>
<dbReference type="EC" id="4.2.1.11" evidence="1"/>
<dbReference type="EMBL" id="CU633749">
    <property type="protein sequence ID" value="CAQ69132.1"/>
    <property type="molecule type" value="Genomic_DNA"/>
</dbReference>
<dbReference type="RefSeq" id="WP_012352460.1">
    <property type="nucleotide sequence ID" value="NC_010528.1"/>
</dbReference>
<dbReference type="SMR" id="B3R499"/>
<dbReference type="GeneID" id="29761395"/>
<dbReference type="KEGG" id="cti:RALTA_A1168"/>
<dbReference type="eggNOG" id="COG0148">
    <property type="taxonomic scope" value="Bacteria"/>
</dbReference>
<dbReference type="HOGENOM" id="CLU_031223_2_1_4"/>
<dbReference type="BioCyc" id="CTAI977880:RALTA_RS05580-MONOMER"/>
<dbReference type="UniPathway" id="UPA00109">
    <property type="reaction ID" value="UER00187"/>
</dbReference>
<dbReference type="Proteomes" id="UP000001692">
    <property type="component" value="Chromosome 1"/>
</dbReference>
<dbReference type="GO" id="GO:0009986">
    <property type="term" value="C:cell surface"/>
    <property type="evidence" value="ECO:0007669"/>
    <property type="project" value="UniProtKB-SubCell"/>
</dbReference>
<dbReference type="GO" id="GO:0005576">
    <property type="term" value="C:extracellular region"/>
    <property type="evidence" value="ECO:0007669"/>
    <property type="project" value="UniProtKB-SubCell"/>
</dbReference>
<dbReference type="GO" id="GO:0000015">
    <property type="term" value="C:phosphopyruvate hydratase complex"/>
    <property type="evidence" value="ECO:0007669"/>
    <property type="project" value="InterPro"/>
</dbReference>
<dbReference type="GO" id="GO:0000287">
    <property type="term" value="F:magnesium ion binding"/>
    <property type="evidence" value="ECO:0007669"/>
    <property type="project" value="UniProtKB-UniRule"/>
</dbReference>
<dbReference type="GO" id="GO:0004634">
    <property type="term" value="F:phosphopyruvate hydratase activity"/>
    <property type="evidence" value="ECO:0007669"/>
    <property type="project" value="UniProtKB-UniRule"/>
</dbReference>
<dbReference type="GO" id="GO:0006096">
    <property type="term" value="P:glycolytic process"/>
    <property type="evidence" value="ECO:0007669"/>
    <property type="project" value="UniProtKB-UniRule"/>
</dbReference>
<dbReference type="CDD" id="cd03313">
    <property type="entry name" value="enolase"/>
    <property type="match status" value="1"/>
</dbReference>
<dbReference type="FunFam" id="3.20.20.120:FF:000001">
    <property type="entry name" value="Enolase"/>
    <property type="match status" value="1"/>
</dbReference>
<dbReference type="FunFam" id="3.30.390.10:FF:000001">
    <property type="entry name" value="Enolase"/>
    <property type="match status" value="1"/>
</dbReference>
<dbReference type="Gene3D" id="3.20.20.120">
    <property type="entry name" value="Enolase-like C-terminal domain"/>
    <property type="match status" value="1"/>
</dbReference>
<dbReference type="Gene3D" id="3.30.390.10">
    <property type="entry name" value="Enolase-like, N-terminal domain"/>
    <property type="match status" value="1"/>
</dbReference>
<dbReference type="HAMAP" id="MF_00318">
    <property type="entry name" value="Enolase"/>
    <property type="match status" value="1"/>
</dbReference>
<dbReference type="InterPro" id="IPR000941">
    <property type="entry name" value="Enolase"/>
</dbReference>
<dbReference type="InterPro" id="IPR036849">
    <property type="entry name" value="Enolase-like_C_sf"/>
</dbReference>
<dbReference type="InterPro" id="IPR029017">
    <property type="entry name" value="Enolase-like_N"/>
</dbReference>
<dbReference type="InterPro" id="IPR020810">
    <property type="entry name" value="Enolase_C"/>
</dbReference>
<dbReference type="InterPro" id="IPR020809">
    <property type="entry name" value="Enolase_CS"/>
</dbReference>
<dbReference type="InterPro" id="IPR020811">
    <property type="entry name" value="Enolase_N"/>
</dbReference>
<dbReference type="NCBIfam" id="TIGR01060">
    <property type="entry name" value="eno"/>
    <property type="match status" value="1"/>
</dbReference>
<dbReference type="PANTHER" id="PTHR11902">
    <property type="entry name" value="ENOLASE"/>
    <property type="match status" value="1"/>
</dbReference>
<dbReference type="PANTHER" id="PTHR11902:SF1">
    <property type="entry name" value="ENOLASE"/>
    <property type="match status" value="1"/>
</dbReference>
<dbReference type="Pfam" id="PF00113">
    <property type="entry name" value="Enolase_C"/>
    <property type="match status" value="1"/>
</dbReference>
<dbReference type="Pfam" id="PF03952">
    <property type="entry name" value="Enolase_N"/>
    <property type="match status" value="1"/>
</dbReference>
<dbReference type="PIRSF" id="PIRSF001400">
    <property type="entry name" value="Enolase"/>
    <property type="match status" value="1"/>
</dbReference>
<dbReference type="PRINTS" id="PR00148">
    <property type="entry name" value="ENOLASE"/>
</dbReference>
<dbReference type="SFLD" id="SFLDS00001">
    <property type="entry name" value="Enolase"/>
    <property type="match status" value="1"/>
</dbReference>
<dbReference type="SFLD" id="SFLDF00002">
    <property type="entry name" value="enolase"/>
    <property type="match status" value="1"/>
</dbReference>
<dbReference type="SMART" id="SM01192">
    <property type="entry name" value="Enolase_C"/>
    <property type="match status" value="1"/>
</dbReference>
<dbReference type="SMART" id="SM01193">
    <property type="entry name" value="Enolase_N"/>
    <property type="match status" value="1"/>
</dbReference>
<dbReference type="SUPFAM" id="SSF51604">
    <property type="entry name" value="Enolase C-terminal domain-like"/>
    <property type="match status" value="1"/>
</dbReference>
<dbReference type="SUPFAM" id="SSF54826">
    <property type="entry name" value="Enolase N-terminal domain-like"/>
    <property type="match status" value="1"/>
</dbReference>
<dbReference type="PROSITE" id="PS00164">
    <property type="entry name" value="ENOLASE"/>
    <property type="match status" value="1"/>
</dbReference>